<feature type="chain" id="PRO_0000027258" description="Capsid scaffolding protein">
    <location>
        <begin position="1"/>
        <end position="646"/>
    </location>
</feature>
<feature type="chain" id="PRO_0000027259" description="Assemblin" evidence="3">
    <location>
        <begin position="1"/>
        <end position="242"/>
    </location>
</feature>
<feature type="chain" id="PRO_0000027260" description="Assembly protein" evidence="3">
    <location>
        <begin position="243"/>
        <end position="646"/>
    </location>
</feature>
<feature type="region of interest" description="Interaction with pAP" evidence="3">
    <location>
        <begin position="336"/>
        <end position="355"/>
    </location>
</feature>
<feature type="region of interest" description="Disordered" evidence="4">
    <location>
        <begin position="421"/>
        <end position="483"/>
    </location>
</feature>
<feature type="region of interest" description="Interaction with major capsid protein" evidence="3">
    <location>
        <begin position="626"/>
        <end position="646"/>
    </location>
</feature>
<feature type="short sequence motif" description="Nuclear localization signal" evidence="1">
    <location>
        <begin position="445"/>
        <end position="451"/>
    </location>
</feature>
<feature type="compositionally biased region" description="Basic and acidic residues" evidence="4">
    <location>
        <begin position="452"/>
        <end position="462"/>
    </location>
</feature>
<feature type="compositionally biased region" description="Basic and acidic residues" evidence="4">
    <location>
        <begin position="471"/>
        <end position="480"/>
    </location>
</feature>
<feature type="active site" description="Charge relay system" evidence="3">
    <location>
        <position position="55"/>
    </location>
</feature>
<feature type="active site" description="Charge relay system" evidence="3">
    <location>
        <position position="123"/>
    </location>
</feature>
<feature type="active site" description="Charge relay system" evidence="3">
    <location>
        <position position="142"/>
    </location>
</feature>
<feature type="site" description="Cleavage; by assemblin; Release site" evidence="3">
    <location>
        <begin position="242"/>
        <end position="243"/>
    </location>
</feature>
<feature type="site" description="Cleavage; by assemblin; Maturation site" evidence="2">
    <location>
        <begin position="622"/>
        <end position="623"/>
    </location>
</feature>
<feature type="splice variant" id="VSP_037416" description="In isoform pAP." evidence="5">
    <location>
        <begin position="1"/>
        <end position="317"/>
    </location>
</feature>
<organism>
    <name type="scientific">Equine herpesvirus 1 (strain V592)</name>
    <name type="common">EHV-1</name>
    <name type="synonym">Equine abortion virus</name>
    <dbReference type="NCBI Taxonomy" id="310273"/>
    <lineage>
        <taxon>Viruses</taxon>
        <taxon>Duplodnaviria</taxon>
        <taxon>Heunggongvirae</taxon>
        <taxon>Peploviricota</taxon>
        <taxon>Herviviricetes</taxon>
        <taxon>Herpesvirales</taxon>
        <taxon>Orthoherpesviridae</taxon>
        <taxon>Alphaherpesvirinae</taxon>
        <taxon>Varicellovirus</taxon>
        <taxon>Varicellovirus equidalpha1</taxon>
        <taxon>Equid alphaherpesvirus 1</taxon>
    </lineage>
</organism>
<dbReference type="EC" id="3.4.21.97" evidence="3"/>
<dbReference type="EMBL" id="AY464052">
    <property type="protein sequence ID" value="AAS45919.1"/>
    <property type="molecule type" value="Genomic_DNA"/>
</dbReference>
<dbReference type="EMBL" id="AY464052">
    <property type="protein sequence ID" value="AAS45920.1"/>
    <property type="molecule type" value="Genomic_DNA"/>
</dbReference>
<dbReference type="SMR" id="P84454"/>
<dbReference type="MEROPS" id="S21.001"/>
<dbReference type="KEGG" id="vg:1487556"/>
<dbReference type="KEGG" id="vg:1487557"/>
<dbReference type="Proteomes" id="UP000008296">
    <property type="component" value="Segment"/>
</dbReference>
<dbReference type="GO" id="GO:0030430">
    <property type="term" value="C:host cell cytoplasm"/>
    <property type="evidence" value="ECO:0007669"/>
    <property type="project" value="UniProtKB-SubCell"/>
</dbReference>
<dbReference type="GO" id="GO:0042025">
    <property type="term" value="C:host cell nucleus"/>
    <property type="evidence" value="ECO:0007669"/>
    <property type="project" value="UniProtKB-SubCell"/>
</dbReference>
<dbReference type="GO" id="GO:0042802">
    <property type="term" value="F:identical protein binding"/>
    <property type="evidence" value="ECO:0007669"/>
    <property type="project" value="UniProtKB-UniRule"/>
</dbReference>
<dbReference type="GO" id="GO:0004252">
    <property type="term" value="F:serine-type endopeptidase activity"/>
    <property type="evidence" value="ECO:0007669"/>
    <property type="project" value="UniProtKB-UniRule"/>
</dbReference>
<dbReference type="GO" id="GO:0039708">
    <property type="term" value="P:nuclear capsid assembly"/>
    <property type="evidence" value="ECO:0007669"/>
    <property type="project" value="UniProtKB-ARBA"/>
</dbReference>
<dbReference type="GO" id="GO:0006508">
    <property type="term" value="P:proteolysis"/>
    <property type="evidence" value="ECO:0007669"/>
    <property type="project" value="UniProtKB-KW"/>
</dbReference>
<dbReference type="GO" id="GO:0019076">
    <property type="term" value="P:viral release from host cell"/>
    <property type="evidence" value="ECO:0007669"/>
    <property type="project" value="UniProtKB-UniRule"/>
</dbReference>
<dbReference type="Gene3D" id="3.20.16.10">
    <property type="entry name" value="Herpesvirus/Caudovirus protease domain"/>
    <property type="match status" value="1"/>
</dbReference>
<dbReference type="HAMAP" id="MF_04008">
    <property type="entry name" value="HSV_SCAF"/>
    <property type="match status" value="1"/>
</dbReference>
<dbReference type="InterPro" id="IPR035443">
    <property type="entry name" value="Herpes_virus_sf"/>
</dbReference>
<dbReference type="InterPro" id="IPR001847">
    <property type="entry name" value="Peptidase_S21"/>
</dbReference>
<dbReference type="Pfam" id="PF00716">
    <property type="entry name" value="Peptidase_S21"/>
    <property type="match status" value="1"/>
</dbReference>
<dbReference type="PRINTS" id="PR00236">
    <property type="entry name" value="HSVCAPSIDP40"/>
</dbReference>
<dbReference type="SUPFAM" id="SSF50789">
    <property type="entry name" value="Herpes virus serine proteinase, assemblin"/>
    <property type="match status" value="1"/>
</dbReference>
<accession>P84454</accession>
<accession>Q6S6T6</accession>
<accession>Q6S6T7</accession>
<evidence type="ECO:0000250" key="1"/>
<evidence type="ECO:0000250" key="2">
    <source>
        <dbReference type="UniProtKB" id="P16753"/>
    </source>
</evidence>
<evidence type="ECO:0000255" key="3">
    <source>
        <dbReference type="HAMAP-Rule" id="MF_04008"/>
    </source>
</evidence>
<evidence type="ECO:0000256" key="4">
    <source>
        <dbReference type="SAM" id="MobiDB-lite"/>
    </source>
</evidence>
<evidence type="ECO:0000305" key="5"/>
<evidence type="ECO:0000312" key="6">
    <source>
        <dbReference type="EMBL" id="AAS45919.1"/>
    </source>
</evidence>
<keyword id="KW-0877">Alternative promoter usage</keyword>
<keyword id="KW-1035">Host cytoplasm</keyword>
<keyword id="KW-1048">Host nucleus</keyword>
<keyword id="KW-0378">Hydrolase</keyword>
<keyword id="KW-0597">Phosphoprotein</keyword>
<keyword id="KW-0645">Protease</keyword>
<keyword id="KW-0720">Serine protease</keyword>
<keyword id="KW-0118">Viral capsid assembly</keyword>
<keyword id="KW-1188">Viral release from host cell</keyword>
<organismHost>
    <name type="scientific">Equus caballus</name>
    <name type="common">Horse</name>
    <dbReference type="NCBI Taxonomy" id="9796"/>
</organismHost>
<gene>
    <name type="ordered locus">35</name>
</gene>
<name>SCAF_EHV1V</name>
<reference evidence="5 6" key="1">
    <citation type="submission" date="2003-11" db="EMBL/GenBank/DDBJ databases">
        <authorList>
            <person name="Davis-Poynter N."/>
            <person name="Nugent J."/>
            <person name="Birch-Machin I."/>
            <person name="Allen G.P."/>
        </authorList>
    </citation>
    <scope>NUCLEOTIDE SEQUENCE [LARGE SCALE GENOMIC DNA]</scope>
</reference>
<proteinExistence type="inferred from homology"/>
<sequence>MDAYTVDGNAVSLPIYVAGYIALYDMGDGGELTLTRETVAAALPPASRLPINIDHRNGCVVGEVLSIVDDARGPFFLGIINCPQLGAVLATAAGPDFFGELSEGLSEQERLLYLVSNYLPSASLSSRRLGPDEEPDETLFAHVSLCVIGRRVGTIVTYDATPENAVAPFKRLSPSSREELLITAREAQSRLGDAATWHLSEDTLTRVLLSTAVNNMLLRNRWNLVARRRREAGIEGHTYLQASASFGITNGCNKADFCGAELVDTCGYKSGEKVHGAPYSRVTLGAKAFTSSSPNALPSSDNDKGGIGERTQKHISAMASSNPQTLSAAGAPLVSGDYILVPAAQYNQLVVGQHTSHPPINAGPAPVTHAVPSQYIPPAYNSLMPPSMYQAPPYWSVPHSANLEAQITALVGALAADRKATKGSDPHVIQGSQCSPPLSPQQERRYARKRRHDWDATTRDDLEGIYYPGERSPRPGERRAGRPSTTIADLMGAVSSLQQEVSQLRAIQTVTAQPQAAPAGLYKPIPAVPPQYSQYQYIQPQHAVSAIVAPQLPGIPSQPTQAVLAPQVPAGEAPGSAKVVAASTAPQQAEQARAAPQQFEAVTSAAVLPVTQPQASSQTVDASASTGLEFGRDDADIFVSQMMSAR</sequence>
<protein>
    <recommendedName>
        <fullName evidence="3">Capsid scaffolding protein</fullName>
    </recommendedName>
    <alternativeName>
        <fullName>Capsid protein P40</fullName>
    </alternativeName>
    <alternativeName>
        <fullName evidence="3">Protease precursor</fullName>
        <shortName evidence="3">pPR</shortName>
    </alternativeName>
    <component>
        <recommendedName>
            <fullName evidence="3">Assemblin</fullName>
            <ecNumber evidence="3">3.4.21.97</ecNumber>
        </recommendedName>
        <alternativeName>
            <fullName>Capsid protein VP24</fullName>
        </alternativeName>
        <alternativeName>
            <fullName evidence="3">Protease</fullName>
            <shortName evidence="3">Pr</shortName>
        </alternativeName>
    </component>
    <component>
        <recommendedName>
            <fullName evidence="3">Assembly protein</fullName>
            <shortName evidence="3">AP</shortName>
        </recommendedName>
        <alternativeName>
            <fullName evidence="3">Capsid assembly protein</fullName>
        </alternativeName>
        <alternativeName>
            <fullName>Capsid protein VP22A</fullName>
        </alternativeName>
    </component>
</protein>
<comment type="function">
    <molecule>Capsid scaffolding protein</molecule>
    <text evidence="3">Acts as a scaffold protein by binding major capsid protein in the cytoplasm, inducing the nuclear localization of both proteins. Multimerizes in the nucleus such as major capsid protein forms the icosahedral T=16 capsid. Autocatalytic cleavage releases the assembly protein, and subsequently abolishes interaction with major capsid protein. Cleavages products are evicted from the capsid before or during DNA packaging.</text>
</comment>
<comment type="function">
    <molecule>Assemblin</molecule>
    <text evidence="3">Protease that plays an essential role in virion assembly within the nucleus. Catalyzes the cleavage of the assembly protein after formation of the spherical procapsid. By that cleavage, the capsid matures and gains its icosahedral shape. The cleavage sites seem to include -Ala-Ser-, -Ala-Ala-, as well as Ala-Thr bonds. Assemblin and cleavages products are evicted from the capsid before or during DNA packaging.</text>
</comment>
<comment type="function">
    <molecule>Assembly protein</molecule>
    <text evidence="3">Plays a major role in capsid assembly. Acts as a scaffold protein by binding major capsid protein. Multimerizes in the nucleus such as major capsid protein forms the icosahedral T=16 capsid. Cleaved by assemblin after capsid completion. The cleavages products are evicted from the capsid before or during DNA packaging.</text>
</comment>
<comment type="catalytic activity">
    <molecule>Assemblin</molecule>
    <reaction evidence="3">
        <text>Cleaves -Ala-|-Ser- and -Ala-|-Ala- bonds in the scaffold protein.</text>
        <dbReference type="EC" id="3.4.21.97"/>
    </reaction>
</comment>
<comment type="subunit">
    <molecule>Capsid scaffolding protein</molecule>
    <text evidence="3">Homomultimer. Interacts with major capsid protein.</text>
</comment>
<comment type="subunit">
    <molecule>Assemblin</molecule>
    <text evidence="3">Exists in a monomer-dimer equilibrium with the dimer being the active species.</text>
</comment>
<comment type="subunit">
    <molecule>Assembly protein</molecule>
    <text evidence="3">Homomultimer. Interacts with major capsid protein.</text>
</comment>
<comment type="subcellular location">
    <molecule>Capsid scaffolding protein</molecule>
    <subcellularLocation>
        <location evidence="3">Host cytoplasm</location>
    </subcellularLocation>
</comment>
<comment type="subcellular location">
    <molecule>Assemblin</molecule>
    <subcellularLocation>
        <location evidence="3">Host nucleus</location>
    </subcellularLocation>
</comment>
<comment type="subcellular location">
    <molecule>Assembly protein</molecule>
    <subcellularLocation>
        <location evidence="3">Host nucleus</location>
    </subcellularLocation>
</comment>
<comment type="alternative products">
    <event type="alternative promoter"/>
    <isoform>
        <id>P84454-1</id>
        <name>Capsid scaffolding protein</name>
        <name>pPR</name>
        <sequence type="displayed"/>
    </isoform>
    <isoform>
        <id>P84454-2</id>
        <name>pAP</name>
        <name>Assembly protein</name>
        <name>gene 35.5 protein</name>
        <sequence type="described" ref="VSP_037416"/>
    </isoform>
</comment>
<comment type="domain">
    <text evidence="3">Region of interaction between pPR and pAP is called Amino conserved domain (ACD). The region of interaction with major capsid protein is called carboxyl conserved domain (CCD).</text>
</comment>
<comment type="PTM">
    <molecule>Capsid scaffolding protein</molecule>
    <text evidence="3">Capsid scaffolding protein is cleaved by assemblin after formation of the spherical procapsid. As a result, the capsid obtains its mature, icosahedral shape. Cleavages occur at two or more sites: release (R-site) and maturation (M-site).</text>
</comment>
<comment type="similarity">
    <text evidence="3">Belongs to the herpesviridae capsid scaffolding protein family.</text>
</comment>